<gene>
    <name type="primary">ERF098</name>
    <name type="ordered locus">At3g23230</name>
    <name type="ORF">K14B15.14</name>
</gene>
<proteinExistence type="evidence at protein level"/>
<evidence type="ECO:0000250" key="1"/>
<evidence type="ECO:0000255" key="2">
    <source>
        <dbReference type="PROSITE-ProRule" id="PRU00366"/>
    </source>
</evidence>
<evidence type="ECO:0000256" key="3">
    <source>
        <dbReference type="SAM" id="MobiDB-lite"/>
    </source>
</evidence>
<evidence type="ECO:0000269" key="4">
    <source>
    </source>
</evidence>
<evidence type="ECO:0000305" key="5"/>
<keyword id="KW-0010">Activator</keyword>
<keyword id="KW-0238">DNA-binding</keyword>
<keyword id="KW-0936">Ethylene signaling pathway</keyword>
<keyword id="KW-0539">Nucleus</keyword>
<keyword id="KW-1185">Reference proteome</keyword>
<keyword id="KW-0804">Transcription</keyword>
<keyword id="KW-0805">Transcription regulation</keyword>
<accession>Q9LTC5</accession>
<sequence>MESSNRSSNNQSQDDKQARFRGVRRRPWGKFAAEIRDPSRNGARLWLGTFETAEEAARAYDRAAFNLRGHLAILNFPNEYYPRMDDYSLRPPYASSSSSSSSGSTSTNVSRQNQREVFEFEYLDDKVLEELLDSEERKR</sequence>
<protein>
    <recommendedName>
        <fullName>Ethylene-responsive transcription factor ERF098</fullName>
    </recommendedName>
</protein>
<comment type="function">
    <text evidence="1">Probably acts as a transcriptional activator. Binds to the GCC-box pathogenesis-related promoter element. May be involved in the regulation of gene expression by stress factors and by components of stress signal transduction pathways (By similarity).</text>
</comment>
<comment type="subunit">
    <text evidence="4">Interacts with MED25.</text>
</comment>
<comment type="subcellular location">
    <subcellularLocation>
        <location evidence="5">Nucleus</location>
    </subcellularLocation>
</comment>
<comment type="similarity">
    <text evidence="5">Belongs to the AP2/ERF transcription factor family. ERF subfamily.</text>
</comment>
<dbReference type="EMBL" id="AJ580377">
    <property type="protein sequence ID" value="CAE45639.1"/>
    <property type="molecule type" value="mRNA"/>
</dbReference>
<dbReference type="EMBL" id="AB025608">
    <property type="protein sequence ID" value="BAA95736.1"/>
    <property type="molecule type" value="Genomic_DNA"/>
</dbReference>
<dbReference type="EMBL" id="CP002686">
    <property type="protein sequence ID" value="AEE76737.1"/>
    <property type="molecule type" value="Genomic_DNA"/>
</dbReference>
<dbReference type="SMR" id="Q9LTC5"/>
<dbReference type="BioGRID" id="7233">
    <property type="interactions" value="5"/>
</dbReference>
<dbReference type="FunCoup" id="Q9LTC5">
    <property type="interactions" value="25"/>
</dbReference>
<dbReference type="IntAct" id="Q9LTC5">
    <property type="interactions" value="3"/>
</dbReference>
<dbReference type="STRING" id="3702.Q9LTC5"/>
<dbReference type="PaxDb" id="3702-AT3G23230.1"/>
<dbReference type="ProteomicsDB" id="220689"/>
<dbReference type="EnsemblPlants" id="AT3G23230.1">
    <property type="protein sequence ID" value="AT3G23230.1"/>
    <property type="gene ID" value="AT3G23230"/>
</dbReference>
<dbReference type="Gramene" id="AT3G23230.1">
    <property type="protein sequence ID" value="AT3G23230.1"/>
    <property type="gene ID" value="AT3G23230"/>
</dbReference>
<dbReference type="KEGG" id="ath:AT3G23230"/>
<dbReference type="Araport" id="AT3G23230"/>
<dbReference type="TAIR" id="AT3G23230">
    <property type="gene designation" value="TDR1"/>
</dbReference>
<dbReference type="eggNOG" id="ENOG502S1PQ">
    <property type="taxonomic scope" value="Eukaryota"/>
</dbReference>
<dbReference type="HOGENOM" id="CLU_058713_5_0_1"/>
<dbReference type="InParanoid" id="Q9LTC5"/>
<dbReference type="OMA" id="HPIREGC"/>
<dbReference type="PhylomeDB" id="Q9LTC5"/>
<dbReference type="PRO" id="PR:Q9LTC5"/>
<dbReference type="Proteomes" id="UP000006548">
    <property type="component" value="Chromosome 3"/>
</dbReference>
<dbReference type="ExpressionAtlas" id="Q9LTC5">
    <property type="expression patterns" value="baseline and differential"/>
</dbReference>
<dbReference type="GO" id="GO:0005634">
    <property type="term" value="C:nucleus"/>
    <property type="evidence" value="ECO:0007669"/>
    <property type="project" value="UniProtKB-SubCell"/>
</dbReference>
<dbReference type="GO" id="GO:0003677">
    <property type="term" value="F:DNA binding"/>
    <property type="evidence" value="ECO:0007669"/>
    <property type="project" value="UniProtKB-KW"/>
</dbReference>
<dbReference type="GO" id="GO:0003700">
    <property type="term" value="F:DNA-binding transcription factor activity"/>
    <property type="evidence" value="ECO:0000250"/>
    <property type="project" value="TAIR"/>
</dbReference>
<dbReference type="GO" id="GO:0009873">
    <property type="term" value="P:ethylene-activated signaling pathway"/>
    <property type="evidence" value="ECO:0000304"/>
    <property type="project" value="TAIR"/>
</dbReference>
<dbReference type="CDD" id="cd00018">
    <property type="entry name" value="AP2"/>
    <property type="match status" value="1"/>
</dbReference>
<dbReference type="FunFam" id="3.30.730.10:FF:000001">
    <property type="entry name" value="Ethylene-responsive transcription factor 2"/>
    <property type="match status" value="1"/>
</dbReference>
<dbReference type="Gene3D" id="3.30.730.10">
    <property type="entry name" value="AP2/ERF domain"/>
    <property type="match status" value="1"/>
</dbReference>
<dbReference type="InterPro" id="IPR001471">
    <property type="entry name" value="AP2/ERF_dom"/>
</dbReference>
<dbReference type="InterPro" id="IPR036955">
    <property type="entry name" value="AP2/ERF_dom_sf"/>
</dbReference>
<dbReference type="InterPro" id="IPR016177">
    <property type="entry name" value="DNA-bd_dom_sf"/>
</dbReference>
<dbReference type="InterPro" id="IPR044808">
    <property type="entry name" value="ERF_plant"/>
</dbReference>
<dbReference type="PANTHER" id="PTHR31190">
    <property type="entry name" value="DNA-BINDING DOMAIN"/>
    <property type="match status" value="1"/>
</dbReference>
<dbReference type="PANTHER" id="PTHR31190:SF321">
    <property type="entry name" value="ETHYLENE-RESPONSIVE TRANSCRIPTION FACTOR ERF098"/>
    <property type="match status" value="1"/>
</dbReference>
<dbReference type="Pfam" id="PF00847">
    <property type="entry name" value="AP2"/>
    <property type="match status" value="1"/>
</dbReference>
<dbReference type="PRINTS" id="PR00367">
    <property type="entry name" value="ETHRSPELEMNT"/>
</dbReference>
<dbReference type="SMART" id="SM00380">
    <property type="entry name" value="AP2"/>
    <property type="match status" value="1"/>
</dbReference>
<dbReference type="SUPFAM" id="SSF54171">
    <property type="entry name" value="DNA-binding domain"/>
    <property type="match status" value="1"/>
</dbReference>
<dbReference type="PROSITE" id="PS51032">
    <property type="entry name" value="AP2_ERF"/>
    <property type="match status" value="1"/>
</dbReference>
<name>ERF98_ARATH</name>
<feature type="chain" id="PRO_0000290416" description="Ethylene-responsive transcription factor ERF098">
    <location>
        <begin position="1"/>
        <end position="139"/>
    </location>
</feature>
<feature type="DNA-binding region" description="AP2/ERF" evidence="2">
    <location>
        <begin position="19"/>
        <end position="77"/>
    </location>
</feature>
<feature type="region of interest" description="Disordered" evidence="3">
    <location>
        <begin position="1"/>
        <end position="25"/>
    </location>
</feature>
<feature type="region of interest" description="Disordered" evidence="3">
    <location>
        <begin position="87"/>
        <end position="112"/>
    </location>
</feature>
<feature type="compositionally biased region" description="Low complexity" evidence="3">
    <location>
        <begin position="1"/>
        <end position="12"/>
    </location>
</feature>
<feature type="compositionally biased region" description="Low complexity" evidence="3">
    <location>
        <begin position="95"/>
        <end position="107"/>
    </location>
</feature>
<organism>
    <name type="scientific">Arabidopsis thaliana</name>
    <name type="common">Mouse-ear cress</name>
    <dbReference type="NCBI Taxonomy" id="3702"/>
    <lineage>
        <taxon>Eukaryota</taxon>
        <taxon>Viridiplantae</taxon>
        <taxon>Streptophyta</taxon>
        <taxon>Embryophyta</taxon>
        <taxon>Tracheophyta</taxon>
        <taxon>Spermatophyta</taxon>
        <taxon>Magnoliopsida</taxon>
        <taxon>eudicotyledons</taxon>
        <taxon>Gunneridae</taxon>
        <taxon>Pentapetalae</taxon>
        <taxon>rosids</taxon>
        <taxon>malvids</taxon>
        <taxon>Brassicales</taxon>
        <taxon>Brassicaceae</taxon>
        <taxon>Camelineae</taxon>
        <taxon>Arabidopsis</taxon>
    </lineage>
</organism>
<reference key="1">
    <citation type="submission" date="2003-08" db="EMBL/GenBank/DDBJ databases">
        <title>Arabidopsis thaliana putative ethylene responsive element binding protein, similar to the At3g23230 protein encoded by chromosome 3.</title>
        <authorList>
            <person name="Gong W."/>
            <person name="Pan Y."/>
            <person name="Peng X.Y."/>
            <person name="Yang J."/>
            <person name="Zhu Y.X."/>
        </authorList>
    </citation>
    <scope>NUCLEOTIDE SEQUENCE [MRNA]</scope>
    <source>
        <strain>cv. Columbia</strain>
    </source>
</reference>
<reference key="2">
    <citation type="journal article" date="2000" name="DNA Res.">
        <title>Structural analysis of Arabidopsis thaliana chromosome 3. I. Sequence features of the regions of 4,504,864 bp covered by sixty P1 and TAC clones.</title>
        <authorList>
            <person name="Sato S."/>
            <person name="Nakamura Y."/>
            <person name="Kaneko T."/>
            <person name="Katoh T."/>
            <person name="Asamizu E."/>
            <person name="Tabata S."/>
        </authorList>
    </citation>
    <scope>NUCLEOTIDE SEQUENCE [LARGE SCALE GENOMIC DNA]</scope>
    <source>
        <strain>cv. Columbia</strain>
    </source>
</reference>
<reference key="3">
    <citation type="journal article" date="2017" name="Plant J.">
        <title>Araport11: a complete reannotation of the Arabidopsis thaliana reference genome.</title>
        <authorList>
            <person name="Cheng C.Y."/>
            <person name="Krishnakumar V."/>
            <person name="Chan A.P."/>
            <person name="Thibaud-Nissen F."/>
            <person name="Schobel S."/>
            <person name="Town C.D."/>
        </authorList>
    </citation>
    <scope>GENOME REANNOTATION</scope>
    <source>
        <strain>cv. Columbia</strain>
    </source>
</reference>
<reference key="4">
    <citation type="journal article" date="2006" name="Plant Physiol.">
        <title>Genome-wide analysis of the ERF gene family in Arabidopsis and rice.</title>
        <authorList>
            <person name="Nakano T."/>
            <person name="Suzuki K."/>
            <person name="Fujimura T."/>
            <person name="Shinshi H."/>
        </authorList>
    </citation>
    <scope>GENE FAMILY</scope>
    <scope>NOMENCLATURE</scope>
</reference>
<reference key="5">
    <citation type="journal article" date="2011" name="Mol. Plant">
        <title>A high-throughput screening system for Arabidopsis transcription factors and its application to Med25-dependent transcriptional regulation.</title>
        <authorList>
            <person name="Ou B."/>
            <person name="Yin K.Q."/>
            <person name="Liu S.N."/>
            <person name="Yang Y."/>
            <person name="Gu T."/>
            <person name="Wing Hui J.M."/>
            <person name="Zhang L."/>
            <person name="Miao J."/>
            <person name="Kondou Y."/>
            <person name="Matsui M."/>
            <person name="Gu H.Y."/>
            <person name="Qu L.J."/>
        </authorList>
    </citation>
    <scope>INTERACTION WITH MED25</scope>
</reference>